<keyword id="KW-0067">ATP-binding</keyword>
<keyword id="KW-0436">Ligase</keyword>
<keyword id="KW-0479">Metal-binding</keyword>
<keyword id="KW-0547">Nucleotide-binding</keyword>
<keyword id="KW-0671">Queuosine biosynthesis</keyword>
<keyword id="KW-1185">Reference proteome</keyword>
<keyword id="KW-0862">Zinc</keyword>
<protein>
    <recommendedName>
        <fullName evidence="1">7-cyano-7-deazaguanine synthase</fullName>
        <ecNumber evidence="1">6.3.4.20</ecNumber>
    </recommendedName>
    <alternativeName>
        <fullName evidence="1">7-cyano-7-carbaguanine synthase</fullName>
    </alternativeName>
    <alternativeName>
        <fullName evidence="1">PreQ(0) synthase</fullName>
    </alternativeName>
    <alternativeName>
        <fullName evidence="1">Queuosine biosynthesis protein QueC</fullName>
    </alternativeName>
</protein>
<evidence type="ECO:0000255" key="1">
    <source>
        <dbReference type="HAMAP-Rule" id="MF_01633"/>
    </source>
</evidence>
<evidence type="ECO:0000305" key="2"/>
<name>QUEC_BRASB</name>
<gene>
    <name evidence="1" type="primary">queC</name>
    <name type="ordered locus">BBta_4081</name>
</gene>
<reference key="1">
    <citation type="journal article" date="2007" name="Science">
        <title>Legumes symbioses: absence of nod genes in photosynthetic bradyrhizobia.</title>
        <authorList>
            <person name="Giraud E."/>
            <person name="Moulin L."/>
            <person name="Vallenet D."/>
            <person name="Barbe V."/>
            <person name="Cytryn E."/>
            <person name="Avarre J.-C."/>
            <person name="Jaubert M."/>
            <person name="Simon D."/>
            <person name="Cartieaux F."/>
            <person name="Prin Y."/>
            <person name="Bena G."/>
            <person name="Hannibal L."/>
            <person name="Fardoux J."/>
            <person name="Kojadinovic M."/>
            <person name="Vuillet L."/>
            <person name="Lajus A."/>
            <person name="Cruveiller S."/>
            <person name="Rouy Z."/>
            <person name="Mangenot S."/>
            <person name="Segurens B."/>
            <person name="Dossat C."/>
            <person name="Franck W.L."/>
            <person name="Chang W.-S."/>
            <person name="Saunders E."/>
            <person name="Bruce D."/>
            <person name="Richardson P."/>
            <person name="Normand P."/>
            <person name="Dreyfus B."/>
            <person name="Pignol D."/>
            <person name="Stacey G."/>
            <person name="Emerich D."/>
            <person name="Vermeglio A."/>
            <person name="Medigue C."/>
            <person name="Sadowsky M."/>
        </authorList>
    </citation>
    <scope>NUCLEOTIDE SEQUENCE [LARGE SCALE GENOMIC DNA]</scope>
    <source>
        <strain>BTAi1 / ATCC BAA-1182</strain>
    </source>
</reference>
<dbReference type="EC" id="6.3.4.20" evidence="1"/>
<dbReference type="EMBL" id="CP000494">
    <property type="protein sequence ID" value="ABQ36147.1"/>
    <property type="status" value="ALT_INIT"/>
    <property type="molecule type" value="Genomic_DNA"/>
</dbReference>
<dbReference type="RefSeq" id="WP_041751522.1">
    <property type="nucleotide sequence ID" value="NC_009485.1"/>
</dbReference>
<dbReference type="SMR" id="A5EJ03"/>
<dbReference type="STRING" id="288000.BBta_4081"/>
<dbReference type="KEGG" id="bbt:BBta_4081"/>
<dbReference type="eggNOG" id="COG0603">
    <property type="taxonomic scope" value="Bacteria"/>
</dbReference>
<dbReference type="HOGENOM" id="CLU_081854_0_0_5"/>
<dbReference type="OrthoDB" id="9789567at2"/>
<dbReference type="UniPathway" id="UPA00391"/>
<dbReference type="Proteomes" id="UP000000246">
    <property type="component" value="Chromosome"/>
</dbReference>
<dbReference type="GO" id="GO:0005524">
    <property type="term" value="F:ATP binding"/>
    <property type="evidence" value="ECO:0007669"/>
    <property type="project" value="UniProtKB-UniRule"/>
</dbReference>
<dbReference type="GO" id="GO:0016879">
    <property type="term" value="F:ligase activity, forming carbon-nitrogen bonds"/>
    <property type="evidence" value="ECO:0007669"/>
    <property type="project" value="UniProtKB-UniRule"/>
</dbReference>
<dbReference type="GO" id="GO:0008270">
    <property type="term" value="F:zinc ion binding"/>
    <property type="evidence" value="ECO:0007669"/>
    <property type="project" value="UniProtKB-UniRule"/>
</dbReference>
<dbReference type="GO" id="GO:0008616">
    <property type="term" value="P:queuosine biosynthetic process"/>
    <property type="evidence" value="ECO:0007669"/>
    <property type="project" value="UniProtKB-UniRule"/>
</dbReference>
<dbReference type="CDD" id="cd01995">
    <property type="entry name" value="QueC-like"/>
    <property type="match status" value="1"/>
</dbReference>
<dbReference type="Gene3D" id="3.40.50.620">
    <property type="entry name" value="HUPs"/>
    <property type="match status" value="1"/>
</dbReference>
<dbReference type="HAMAP" id="MF_01633">
    <property type="entry name" value="QueC"/>
    <property type="match status" value="1"/>
</dbReference>
<dbReference type="InterPro" id="IPR018317">
    <property type="entry name" value="QueC"/>
</dbReference>
<dbReference type="InterPro" id="IPR014729">
    <property type="entry name" value="Rossmann-like_a/b/a_fold"/>
</dbReference>
<dbReference type="NCBIfam" id="TIGR00364">
    <property type="entry name" value="7-cyano-7-deazaguanine synthase QueC"/>
    <property type="match status" value="1"/>
</dbReference>
<dbReference type="PANTHER" id="PTHR42914">
    <property type="entry name" value="7-CYANO-7-DEAZAGUANINE SYNTHASE"/>
    <property type="match status" value="1"/>
</dbReference>
<dbReference type="PANTHER" id="PTHR42914:SF1">
    <property type="entry name" value="7-CYANO-7-DEAZAGUANINE SYNTHASE"/>
    <property type="match status" value="1"/>
</dbReference>
<dbReference type="Pfam" id="PF06508">
    <property type="entry name" value="QueC"/>
    <property type="match status" value="1"/>
</dbReference>
<dbReference type="PIRSF" id="PIRSF006293">
    <property type="entry name" value="ExsB"/>
    <property type="match status" value="1"/>
</dbReference>
<dbReference type="SUPFAM" id="SSF52402">
    <property type="entry name" value="Adenine nucleotide alpha hydrolases-like"/>
    <property type="match status" value="1"/>
</dbReference>
<proteinExistence type="inferred from homology"/>
<accession>A5EJ03</accession>
<comment type="function">
    <text evidence="1">Catalyzes the ATP-dependent conversion of 7-carboxy-7-deazaguanine (CDG) to 7-cyano-7-deazaguanine (preQ(0)).</text>
</comment>
<comment type="catalytic activity">
    <reaction evidence="1">
        <text>7-carboxy-7-deazaguanine + NH4(+) + ATP = 7-cyano-7-deazaguanine + ADP + phosphate + H2O + H(+)</text>
        <dbReference type="Rhea" id="RHEA:27982"/>
        <dbReference type="ChEBI" id="CHEBI:15377"/>
        <dbReference type="ChEBI" id="CHEBI:15378"/>
        <dbReference type="ChEBI" id="CHEBI:28938"/>
        <dbReference type="ChEBI" id="CHEBI:30616"/>
        <dbReference type="ChEBI" id="CHEBI:43474"/>
        <dbReference type="ChEBI" id="CHEBI:45075"/>
        <dbReference type="ChEBI" id="CHEBI:61036"/>
        <dbReference type="ChEBI" id="CHEBI:456216"/>
        <dbReference type="EC" id="6.3.4.20"/>
    </reaction>
</comment>
<comment type="cofactor">
    <cofactor evidence="1">
        <name>Zn(2+)</name>
        <dbReference type="ChEBI" id="CHEBI:29105"/>
    </cofactor>
    <text evidence="1">Binds 1 zinc ion per subunit.</text>
</comment>
<comment type="pathway">
    <text evidence="1">Purine metabolism; 7-cyano-7-deazaguanine biosynthesis.</text>
</comment>
<comment type="similarity">
    <text evidence="1">Belongs to the QueC family.</text>
</comment>
<comment type="sequence caution" evidence="2">
    <conflict type="erroneous initiation">
        <sequence resource="EMBL-CDS" id="ABQ36147"/>
    </conflict>
</comment>
<feature type="chain" id="PRO_0000336897" description="7-cyano-7-deazaguanine synthase">
    <location>
        <begin position="1"/>
        <end position="239"/>
    </location>
</feature>
<feature type="binding site" evidence="1">
    <location>
        <begin position="13"/>
        <end position="23"/>
    </location>
    <ligand>
        <name>ATP</name>
        <dbReference type="ChEBI" id="CHEBI:30616"/>
    </ligand>
</feature>
<feature type="binding site" evidence="1">
    <location>
        <position position="201"/>
    </location>
    <ligand>
        <name>Zn(2+)</name>
        <dbReference type="ChEBI" id="CHEBI:29105"/>
    </ligand>
</feature>
<feature type="binding site" evidence="1">
    <location>
        <position position="216"/>
    </location>
    <ligand>
        <name>Zn(2+)</name>
        <dbReference type="ChEBI" id="CHEBI:29105"/>
    </ligand>
</feature>
<feature type="binding site" evidence="1">
    <location>
        <position position="219"/>
    </location>
    <ligand>
        <name>Zn(2+)</name>
        <dbReference type="ChEBI" id="CHEBI:29105"/>
    </ligand>
</feature>
<feature type="binding site" evidence="1">
    <location>
        <position position="222"/>
    </location>
    <ligand>
        <name>Zn(2+)</name>
        <dbReference type="ChEBI" id="CHEBI:29105"/>
    </ligand>
</feature>
<organism>
    <name type="scientific">Bradyrhizobium sp. (strain BTAi1 / ATCC BAA-1182)</name>
    <dbReference type="NCBI Taxonomy" id="288000"/>
    <lineage>
        <taxon>Bacteria</taxon>
        <taxon>Pseudomonadati</taxon>
        <taxon>Pseudomonadota</taxon>
        <taxon>Alphaproteobacteria</taxon>
        <taxon>Hyphomicrobiales</taxon>
        <taxon>Nitrobacteraceae</taxon>
        <taxon>Bradyrhizobium</taxon>
    </lineage>
</organism>
<sequence length="239" mass="26143">MSDTHDMTALVLFSGGQDSTTCLAWALDRFARIETIGFDYGQRHAIELDCRARLLDGLAQLRPEWAGKLGDGHTLEIPTLSAISETALTRDVAIEMGADGLPNTFVPGRNLVFLTFAAALAYRRGISHIVGGMCETDYSGYPDCRDETIKALQGALSLGMARPFELHTPLMWLSKAATWQLAYDLGGRDLVDLIRDQSHTCYLGERGARHDWGYGCGACPACDLRARGWHEYIAGSAQS</sequence>